<keyword id="KW-0106">Calcium</keyword>
<keyword id="KW-1217">Cell adhesion impairing toxin</keyword>
<keyword id="KW-0903">Direct protein sequencing</keyword>
<keyword id="KW-1015">Disulfide bond</keyword>
<keyword id="KW-1206">Fibrinogenolytic toxin</keyword>
<keyword id="KW-0325">Glycoprotein</keyword>
<keyword id="KW-1200">Hemorrhagic toxin</keyword>
<keyword id="KW-1199">Hemostasis impairing toxin</keyword>
<keyword id="KW-0378">Hydrolase</keyword>
<keyword id="KW-0479">Metal-binding</keyword>
<keyword id="KW-0482">Metalloprotease</keyword>
<keyword id="KW-0645">Protease</keyword>
<keyword id="KW-0873">Pyrrolidone carboxylic acid</keyword>
<keyword id="KW-0964">Secreted</keyword>
<keyword id="KW-0732">Signal</keyword>
<keyword id="KW-0800">Toxin</keyword>
<keyword id="KW-0862">Zinc</keyword>
<keyword id="KW-0865">Zymogen</keyword>
<dbReference type="EC" id="3.4.24.-"/>
<dbReference type="EMBL" id="AF051787">
    <property type="protein sequence ID" value="AAD02652.1"/>
    <property type="molecule type" value="mRNA"/>
</dbReference>
<dbReference type="PIR" id="A59414">
    <property type="entry name" value="A59414"/>
</dbReference>
<dbReference type="SMR" id="P0C7B0"/>
<dbReference type="MEROPS" id="M12.022"/>
<dbReference type="iPTMnet" id="P0C7B0"/>
<dbReference type="GO" id="GO:0005576">
    <property type="term" value="C:extracellular region"/>
    <property type="evidence" value="ECO:0007669"/>
    <property type="project" value="UniProtKB-SubCell"/>
</dbReference>
<dbReference type="GO" id="GO:0005886">
    <property type="term" value="C:plasma membrane"/>
    <property type="evidence" value="ECO:0007669"/>
    <property type="project" value="TreeGrafter"/>
</dbReference>
<dbReference type="GO" id="GO:0046872">
    <property type="term" value="F:metal ion binding"/>
    <property type="evidence" value="ECO:0007669"/>
    <property type="project" value="UniProtKB-KW"/>
</dbReference>
<dbReference type="GO" id="GO:0004222">
    <property type="term" value="F:metalloendopeptidase activity"/>
    <property type="evidence" value="ECO:0007669"/>
    <property type="project" value="InterPro"/>
</dbReference>
<dbReference type="GO" id="GO:0090729">
    <property type="term" value="F:toxin activity"/>
    <property type="evidence" value="ECO:0007669"/>
    <property type="project" value="UniProtKB-KW"/>
</dbReference>
<dbReference type="GO" id="GO:0006508">
    <property type="term" value="P:proteolysis"/>
    <property type="evidence" value="ECO:0007669"/>
    <property type="project" value="UniProtKB-KW"/>
</dbReference>
<dbReference type="CDD" id="cd04269">
    <property type="entry name" value="ZnMc_adamalysin_II_like"/>
    <property type="match status" value="1"/>
</dbReference>
<dbReference type="FunFam" id="3.40.390.10:FF:000002">
    <property type="entry name" value="Disintegrin and metalloproteinase domain-containing protein 22"/>
    <property type="match status" value="1"/>
</dbReference>
<dbReference type="FunFam" id="4.10.70.10:FF:000001">
    <property type="entry name" value="Disintegrin and metalloproteinase domain-containing protein 22"/>
    <property type="match status" value="1"/>
</dbReference>
<dbReference type="Gene3D" id="3.40.390.10">
    <property type="entry name" value="Collagenase (Catalytic Domain)"/>
    <property type="match status" value="1"/>
</dbReference>
<dbReference type="Gene3D" id="4.10.70.10">
    <property type="entry name" value="Disintegrin domain"/>
    <property type="match status" value="1"/>
</dbReference>
<dbReference type="InterPro" id="IPR006586">
    <property type="entry name" value="ADAM_Cys-rich"/>
</dbReference>
<dbReference type="InterPro" id="IPR018358">
    <property type="entry name" value="Disintegrin_CS"/>
</dbReference>
<dbReference type="InterPro" id="IPR001762">
    <property type="entry name" value="Disintegrin_dom"/>
</dbReference>
<dbReference type="InterPro" id="IPR036436">
    <property type="entry name" value="Disintegrin_dom_sf"/>
</dbReference>
<dbReference type="InterPro" id="IPR024079">
    <property type="entry name" value="MetalloPept_cat_dom_sf"/>
</dbReference>
<dbReference type="InterPro" id="IPR001590">
    <property type="entry name" value="Peptidase_M12B"/>
</dbReference>
<dbReference type="InterPro" id="IPR002870">
    <property type="entry name" value="Peptidase_M12B_N"/>
</dbReference>
<dbReference type="InterPro" id="IPR034027">
    <property type="entry name" value="Reprolysin_adamalysin"/>
</dbReference>
<dbReference type="PANTHER" id="PTHR11905">
    <property type="entry name" value="ADAM A DISINTEGRIN AND METALLOPROTEASE DOMAIN"/>
    <property type="match status" value="1"/>
</dbReference>
<dbReference type="PANTHER" id="PTHR11905:SF32">
    <property type="entry name" value="DISINTEGRIN AND METALLOPROTEINASE DOMAIN-CONTAINING PROTEIN 28"/>
    <property type="match status" value="1"/>
</dbReference>
<dbReference type="Pfam" id="PF08516">
    <property type="entry name" value="ADAM_CR"/>
    <property type="match status" value="1"/>
</dbReference>
<dbReference type="Pfam" id="PF00200">
    <property type="entry name" value="Disintegrin"/>
    <property type="match status" value="1"/>
</dbReference>
<dbReference type="Pfam" id="PF01562">
    <property type="entry name" value="Pep_M12B_propep"/>
    <property type="match status" value="1"/>
</dbReference>
<dbReference type="Pfam" id="PF01421">
    <property type="entry name" value="Reprolysin"/>
    <property type="match status" value="1"/>
</dbReference>
<dbReference type="PRINTS" id="PR00289">
    <property type="entry name" value="DISINTEGRIN"/>
</dbReference>
<dbReference type="SMART" id="SM00608">
    <property type="entry name" value="ACR"/>
    <property type="match status" value="1"/>
</dbReference>
<dbReference type="SMART" id="SM00050">
    <property type="entry name" value="DISIN"/>
    <property type="match status" value="1"/>
</dbReference>
<dbReference type="SUPFAM" id="SSF57552">
    <property type="entry name" value="Blood coagulation inhibitor (disintegrin)"/>
    <property type="match status" value="1"/>
</dbReference>
<dbReference type="SUPFAM" id="SSF55486">
    <property type="entry name" value="Metalloproteases ('zincins'), catalytic domain"/>
    <property type="match status" value="1"/>
</dbReference>
<dbReference type="PROSITE" id="PS50215">
    <property type="entry name" value="ADAM_MEPRO"/>
    <property type="match status" value="1"/>
</dbReference>
<dbReference type="PROSITE" id="PS00427">
    <property type="entry name" value="DISINTEGRIN_1"/>
    <property type="match status" value="1"/>
</dbReference>
<dbReference type="PROSITE" id="PS50214">
    <property type="entry name" value="DISINTEGRIN_2"/>
    <property type="match status" value="1"/>
</dbReference>
<dbReference type="PROSITE" id="PS00142">
    <property type="entry name" value="ZINC_PROTEASE"/>
    <property type="match status" value="1"/>
</dbReference>
<accession>P0C7B0</accession>
<accession>Q9YI20</accession>
<sequence>MIQVLLVTICLAAFPYQGSSIILESGNVNDYEVVYPRKVTALPKGAVQPKYEDAMQYEFKVNGEPVVLHLGKNKQLFSKDYSETHYSPDGREITTNPPVEDHCYYHGRIENDADSTRSISACNGLKGHFKLQGETYLIEPLKLSDSEAHAVYKYENILKEDEAPKMCGVTQNWESYEPIKKASQLNLTPEQQRYNPFRFVELVLVADKGMVTKNNGDLNKIKTRMYELANNLNDIYRYMYIHVALVGVEIWSDGDKITVTPNVDDTLSSFAEWRKTHLLTRKKHDNAQLLTAIDFNGPTIGYAYIASMCHPKRSVGIVQDYSPINLVLSVVMAHEMGHNLGIHHDHSYCSCGDYACIMGATISHEPSTFFSNCSYIQCWDFIMDHNPECIVNEPLGTDIVSPPVCGNELLEVGEECDCGTPENCQNECCDAATCKLKSGSQCGHGDCCEQCKFSKSGTECRESMSECDPAEHCTGQSSECPADVFHKNGQPCLHNYGYCYNGNCPIMYHQCYALWGADVYEAEDSCFESNKKGNYYGYCRKENGKKIPCAPEDVKCGRLYCKDNSPGQNNPCKMFYSNEDEHKGMVLPGTKCGDGKVCSNGHCVDVATAY</sequence>
<proteinExistence type="evidence at protein level"/>
<feature type="signal peptide" evidence="2">
    <location>
        <begin position="1"/>
        <end position="20"/>
    </location>
</feature>
<feature type="propeptide" id="PRO_0000340280" evidence="6">
    <location>
        <begin position="21"/>
        <end position="191"/>
    </location>
</feature>
<feature type="chain" id="PRO_0000330002" description="Zinc metalloproteinase-disintegrin-like brevilysin H6">
    <location>
        <begin position="192"/>
        <end position="610"/>
    </location>
</feature>
<feature type="chain" id="PRO_0000330003" description="p45K">
    <location>
        <begin position="290"/>
        <end position="610"/>
    </location>
</feature>
<feature type="chain" id="PRO_0000330004" description="Disintegrin-like p29K">
    <location>
        <begin position="399"/>
        <end position="610"/>
    </location>
</feature>
<feature type="domain" description="Peptidase M12B" evidence="4">
    <location>
        <begin position="198"/>
        <end position="394"/>
    </location>
</feature>
<feature type="domain" description="Disintegrin" evidence="3">
    <location>
        <begin position="402"/>
        <end position="488"/>
    </location>
</feature>
<feature type="short sequence motif" description="D/ECD-tripeptide">
    <location>
        <begin position="466"/>
        <end position="468"/>
    </location>
</feature>
<feature type="active site" evidence="4 5">
    <location>
        <position position="335"/>
    </location>
</feature>
<feature type="binding site" evidence="1">
    <location>
        <position position="201"/>
    </location>
    <ligand>
        <name>Ca(2+)</name>
        <dbReference type="ChEBI" id="CHEBI:29108"/>
        <label>1</label>
    </ligand>
</feature>
<feature type="binding site" evidence="1">
    <location>
        <position position="285"/>
    </location>
    <ligand>
        <name>Ca(2+)</name>
        <dbReference type="ChEBI" id="CHEBI:29108"/>
        <label>1</label>
    </ligand>
</feature>
<feature type="binding site" evidence="1">
    <location>
        <position position="334"/>
    </location>
    <ligand>
        <name>Zn(2+)</name>
        <dbReference type="ChEBI" id="CHEBI:29105"/>
        <note>catalytic</note>
    </ligand>
</feature>
<feature type="binding site" evidence="1">
    <location>
        <position position="338"/>
    </location>
    <ligand>
        <name>Zn(2+)</name>
        <dbReference type="ChEBI" id="CHEBI:29105"/>
        <note>catalytic</note>
    </ligand>
</feature>
<feature type="binding site" evidence="1">
    <location>
        <position position="344"/>
    </location>
    <ligand>
        <name>Zn(2+)</name>
        <dbReference type="ChEBI" id="CHEBI:29105"/>
        <note>catalytic</note>
    </ligand>
</feature>
<feature type="binding site" evidence="1">
    <location>
        <position position="389"/>
    </location>
    <ligand>
        <name>Ca(2+)</name>
        <dbReference type="ChEBI" id="CHEBI:29108"/>
        <label>1</label>
    </ligand>
</feature>
<feature type="binding site" evidence="1">
    <location>
        <position position="392"/>
    </location>
    <ligand>
        <name>Ca(2+)</name>
        <dbReference type="ChEBI" id="CHEBI:29108"/>
        <label>1</label>
    </ligand>
</feature>
<feature type="binding site" evidence="1">
    <location>
        <position position="404"/>
    </location>
    <ligand>
        <name>Ca(2+)</name>
        <dbReference type="ChEBI" id="CHEBI:29108"/>
        <label>2</label>
    </ligand>
</feature>
<feature type="binding site" evidence="1">
    <location>
        <position position="407"/>
    </location>
    <ligand>
        <name>Ca(2+)</name>
        <dbReference type="ChEBI" id="CHEBI:29108"/>
        <label>2</label>
    </ligand>
</feature>
<feature type="binding site" evidence="1">
    <location>
        <position position="409"/>
    </location>
    <ligand>
        <name>Ca(2+)</name>
        <dbReference type="ChEBI" id="CHEBI:29108"/>
        <label>2</label>
    </ligand>
</feature>
<feature type="binding site" evidence="1">
    <location>
        <position position="411"/>
    </location>
    <ligand>
        <name>Ca(2+)</name>
        <dbReference type="ChEBI" id="CHEBI:29108"/>
        <label>2</label>
    </ligand>
</feature>
<feature type="binding site" evidence="1">
    <location>
        <position position="414"/>
    </location>
    <ligand>
        <name>Ca(2+)</name>
        <dbReference type="ChEBI" id="CHEBI:29108"/>
        <label>2</label>
    </ligand>
</feature>
<feature type="binding site" evidence="1">
    <location>
        <position position="417"/>
    </location>
    <ligand>
        <name>Ca(2+)</name>
        <dbReference type="ChEBI" id="CHEBI:29108"/>
        <label>2</label>
    </ligand>
</feature>
<feature type="binding site" evidence="1">
    <location>
        <position position="468"/>
    </location>
    <ligand>
        <name>Ca(2+)</name>
        <dbReference type="ChEBI" id="CHEBI:29108"/>
        <label>3</label>
    </ligand>
</feature>
<feature type="binding site" evidence="1">
    <location>
        <position position="469"/>
    </location>
    <ligand>
        <name>Ca(2+)</name>
        <dbReference type="ChEBI" id="CHEBI:29108"/>
        <label>3</label>
    </ligand>
</feature>
<feature type="binding site" evidence="1">
    <location>
        <position position="471"/>
    </location>
    <ligand>
        <name>Ca(2+)</name>
        <dbReference type="ChEBI" id="CHEBI:29108"/>
        <label>3</label>
    </ligand>
</feature>
<feature type="binding site" evidence="1">
    <location>
        <position position="483"/>
    </location>
    <ligand>
        <name>Ca(2+)</name>
        <dbReference type="ChEBI" id="CHEBI:29108"/>
        <label>3</label>
    </ligand>
</feature>
<feature type="binding site" evidence="1">
    <location>
        <position position="484"/>
    </location>
    <ligand>
        <name>Ca(2+)</name>
        <dbReference type="ChEBI" id="CHEBI:29108"/>
        <label>3</label>
    </ligand>
</feature>
<feature type="modified residue" description="Pyrrolidone carboxylic acid" evidence="6">
    <location>
        <position position="192"/>
    </location>
</feature>
<feature type="glycosylation site" description="N-linked (GlcNAc...) asparagine" evidence="6">
    <location>
        <position position="372"/>
    </location>
</feature>
<feature type="disulfide bond" description="In zinc metalloproteinase-disintegrin-like brevilysin H6" evidence="6">
    <location>
        <begin position="309"/>
        <end position="389"/>
    </location>
</feature>
<feature type="disulfide bond" description="In zinc metalloproteinase-disintegrin-like brevilysin H6" evidence="1">
    <location>
        <begin position="349"/>
        <end position="373"/>
    </location>
</feature>
<feature type="disulfide bond" description="In zinc metalloproteinase-disintegrin-like brevilysin H6" evidence="1">
    <location>
        <begin position="351"/>
        <end position="356"/>
    </location>
</feature>
<feature type="disulfide bond" description="Alternate" evidence="3 4 6">
    <location>
        <begin position="373"/>
        <end position="378"/>
    </location>
</feature>
<feature type="disulfide bond" description="In zinc metalloproteinase-disintegrin-like brevilysin H6; alternate" evidence="1">
    <location>
        <begin position="405"/>
        <end position="434"/>
    </location>
</feature>
<feature type="disulfide bond" description="In disintegrin-like p29K; alternate" evidence="1">
    <location>
        <begin position="405"/>
        <end position="424"/>
    </location>
</feature>
<feature type="disulfide bond" description="In disintegrin-like p29K; alternate" evidence="1">
    <location>
        <begin position="416"/>
        <end position="434"/>
    </location>
</feature>
<feature type="disulfide bond" description="In zinc metalloproteinase-disintegrin-like brevilysin H6; alternate" evidence="1">
    <location>
        <begin position="416"/>
        <end position="429"/>
    </location>
</feature>
<feature type="disulfide bond" description="In zinc metalloproteinase-disintegrin-like brevilysin H6; alternate" evidence="1">
    <location>
        <begin position="418"/>
        <end position="424"/>
    </location>
</feature>
<feature type="disulfide bond" description="In zinc metalloproteinase-disintegrin-like brevilysin H6" evidence="1">
    <location>
        <begin position="428"/>
        <end position="451"/>
    </location>
</feature>
<feature type="disulfide bond" description="In zinc metalloproteinase-disintegrin-like brevilysin H6" evidence="1">
    <location>
        <begin position="442"/>
        <end position="448"/>
    </location>
</feature>
<feature type="disulfide bond" description="In zinc metalloproteinase-disintegrin-like brevilysin H6" evidence="1">
    <location>
        <begin position="447"/>
        <end position="473"/>
    </location>
</feature>
<feature type="disulfide bond" description="In both disintegrin-like p29K and zinc metalloproteinase-disintegrin-like brevilysin H6" evidence="3 4">
    <location>
        <begin position="460"/>
        <end position="480"/>
    </location>
</feature>
<feature type="disulfide bond" description="In zinc metalloproteinase-disintegrin-like brevilysin H6; alternate" evidence="1">
    <location>
        <begin position="467"/>
        <end position="499"/>
    </location>
</feature>
<feature type="disulfide bond" description="In disintegrin-like p29K; alternate" evidence="1">
    <location>
        <begin position="467"/>
        <end position="492"/>
    </location>
</feature>
<feature type="disulfide bond" description="In zinc metalloproteinase-disintegrin-like brevilysin H6; alternate" evidence="1">
    <location>
        <begin position="492"/>
        <end position="504"/>
    </location>
</feature>
<feature type="disulfide bond" description="In disintegrin-like p29K" evidence="1">
    <location>
        <begin position="499"/>
        <end position="504"/>
    </location>
</feature>
<feature type="disulfide bond" description="In zinc metalloproteinase-disintegrin-like brevilysin H6; alternate" evidence="1">
    <location>
        <begin position="511"/>
        <end position="561"/>
    </location>
</feature>
<feature type="disulfide bond" description="In disintegrin-like p29K; alternate" evidence="1">
    <location>
        <begin position="511"/>
        <end position="526"/>
    </location>
</feature>
<feature type="disulfide bond" description="In zinc metalloproteinase-disintegrin-like brevilysin H6; alternate" evidence="1">
    <location>
        <begin position="526"/>
        <end position="572"/>
    </location>
</feature>
<feature type="disulfide bond" description="In zinc metalloproteinase-disintegrin-like brevilysin H6; alternate" evidence="1">
    <location>
        <begin position="539"/>
        <end position="549"/>
    </location>
</feature>
<feature type="disulfide bond" description="In disintegrin-like p29K; alternate" evidence="1">
    <location>
        <begin position="549"/>
        <end position="556"/>
    </location>
</feature>
<feature type="disulfide bond" description="In zinc metalloproteinase-disintegrin-like brevilysin H6; alternate" evidence="1">
    <location>
        <begin position="556"/>
        <end position="598"/>
    </location>
</feature>
<feature type="disulfide bond" description="In disintegrin-like p29K" evidence="1">
    <location>
        <begin position="561"/>
        <end position="572"/>
    </location>
</feature>
<feature type="disulfide bond" description="In zinc metalloproteinase-disintegrin-like brevilysin H6; alternate" evidence="1">
    <location>
        <begin position="592"/>
        <end position="603"/>
    </location>
</feature>
<feature type="disulfide bond" description="In disintegrin-like p29K" evidence="1">
    <location>
        <begin position="598"/>
        <end position="603"/>
    </location>
</feature>
<feature type="sequence conflict" description="In Ref. 2; AA sequence." evidence="7" ref="2">
    <original>F</original>
    <variation>Y</variation>
    <location>
        <position position="199"/>
    </location>
</feature>
<feature type="sequence conflict" description="In Ref. 2; AA sequence." evidence="7" ref="2">
    <original>N</original>
    <variation>D</variation>
    <location>
        <position position="219"/>
    </location>
</feature>
<feature type="sequence conflict" description="In Ref. 2; AA sequence." evidence="7" ref="2">
    <original>H</original>
    <variation>D</variation>
    <location>
        <position position="277"/>
    </location>
</feature>
<feature type="sequence conflict" description="In Ref. 2; AA sequence." evidence="7" ref="2">
    <original>H</original>
    <variation>G</variation>
    <location>
        <position position="346"/>
    </location>
</feature>
<feature type="sequence conflict" description="In Ref. 2; AA sequence." evidence="7" ref="2">
    <original>S</original>
    <variation>P</variation>
    <location>
        <position position="465"/>
    </location>
</feature>
<feature type="sequence conflict" description="In Ref. 2; AA sequence." evidence="7" ref="2">
    <original>H</original>
    <variation>D</variation>
    <location>
        <position position="494"/>
    </location>
</feature>
<feature type="sequence conflict" description="In Ref. 2; AA sequence." evidence="7" ref="2">
    <original>E</original>
    <variation>D</variation>
    <location>
        <position position="521"/>
    </location>
</feature>
<feature type="sequence conflict" description="In Ref. 2; AA sequence." evidence="7" ref="2">
    <original>K</original>
    <variation>T</variation>
    <location>
        <position position="531"/>
    </location>
</feature>
<feature type="sequence conflict" description="In Ref. 2; AA sequence." evidence="7" ref="2">
    <original>K</original>
    <variation>I</variation>
    <location>
        <position position="545"/>
    </location>
</feature>
<evidence type="ECO:0000250" key="1"/>
<evidence type="ECO:0000255" key="2"/>
<evidence type="ECO:0000255" key="3">
    <source>
        <dbReference type="PROSITE-ProRule" id="PRU00068"/>
    </source>
</evidence>
<evidence type="ECO:0000255" key="4">
    <source>
        <dbReference type="PROSITE-ProRule" id="PRU00276"/>
    </source>
</evidence>
<evidence type="ECO:0000255" key="5">
    <source>
        <dbReference type="PROSITE-ProRule" id="PRU10095"/>
    </source>
</evidence>
<evidence type="ECO:0000269" key="6">
    <source>
    </source>
</evidence>
<evidence type="ECO:0000305" key="7"/>
<protein>
    <recommendedName>
        <fullName>Zinc metalloproteinase-disintegrin-like brevilysin H6</fullName>
        <shortName>Mt-a</shortName>
        <ecNumber>3.4.24.-</ecNumber>
    </recommendedName>
    <alternativeName>
        <fullName>Snake venom metalloproteinase</fullName>
        <shortName>SVMP</shortName>
    </alternativeName>
    <component>
        <recommendedName>
            <fullName>p45K</fullName>
        </recommendedName>
    </component>
    <component>
        <recommendedName>
            <fullName>Disintegrin-like p29K</fullName>
        </recommendedName>
    </component>
</protein>
<name>VM3H6_GLOBR</name>
<organism>
    <name type="scientific">Gloydius brevicauda</name>
    <name type="common">Korean slamosa snake</name>
    <name type="synonym">Agkistrodon halys brevicaudus</name>
    <dbReference type="NCBI Taxonomy" id="3148161"/>
    <lineage>
        <taxon>Eukaryota</taxon>
        <taxon>Metazoa</taxon>
        <taxon>Chordata</taxon>
        <taxon>Craniata</taxon>
        <taxon>Vertebrata</taxon>
        <taxon>Euteleostomi</taxon>
        <taxon>Lepidosauria</taxon>
        <taxon>Squamata</taxon>
        <taxon>Bifurcata</taxon>
        <taxon>Unidentata</taxon>
        <taxon>Episquamata</taxon>
        <taxon>Toxicofera</taxon>
        <taxon>Serpentes</taxon>
        <taxon>Colubroidea</taxon>
        <taxon>Viperidae</taxon>
        <taxon>Crotalinae</taxon>
        <taxon>Gloydius</taxon>
    </lineage>
</organism>
<comment type="function">
    <text evidence="6">Shows weak hemorrhagic activity. Rapidly degrades the alpha-chain of fibrinogen (FGA).</text>
</comment>
<comment type="cofactor">
    <cofactor evidence="1">
        <name>Zn(2+)</name>
        <dbReference type="ChEBI" id="CHEBI:29105"/>
    </cofactor>
    <text evidence="1">Binds 1 zinc ion per subunit.</text>
</comment>
<comment type="activity regulation">
    <text evidence="6">Inhibited by chelating agents. Calcium ions enhance its activity, they also suppress autoproteolysis, and contribute to the stability of the enzyme against pH, heating, urea and cysteine.</text>
</comment>
<comment type="biophysicochemical properties">
    <phDependence>
        <text>Optimum pH is 6.8 in the absence of calcium ions. Optimum pH is 5.6-8.5 in the presence of calcium ions.</text>
    </phDependence>
    <temperatureDependence>
        <text>The activity is markedly reduced above 40 degrees Celsius. Calcium ions increases the thermal stability by 10 degrees Celsius.</text>
    </temperatureDependence>
</comment>
<comment type="subunit">
    <text evidence="1">Monomer.</text>
</comment>
<comment type="subcellular location">
    <subcellularLocation>
        <location evidence="6">Secreted</location>
    </subcellularLocation>
</comment>
<comment type="tissue specificity">
    <text evidence="6">Expressed by the venom gland.</text>
</comment>
<comment type="PTM">
    <text evidence="6">In the absence of calcium ions, is autocatalytically degraded giving 29 (p29K) and 45 kDa (p45K) fragments. In presence of calcium ions, the p45K is not detected (PubMed:10920250).</text>
</comment>
<comment type="miscellaneous">
    <text>The metalloproteinase domain which is released from the cleavage of the disintegrin bothropasin may be unstable.</text>
</comment>
<comment type="miscellaneous">
    <text>The disintegrin domain belongs to the long disintegrin subfamily.</text>
</comment>
<comment type="similarity">
    <text evidence="7">Belongs to the venom metalloproteinase (M12B) family. P-III subfamily. P-IIIb sub-subfamily.</text>
</comment>
<reference key="1">
    <citation type="submission" date="1998-03" db="EMBL/GenBank/DDBJ databases">
        <authorList>
            <person name="Jeon O.-H."/>
            <person name="Kim D.-S."/>
        </authorList>
    </citation>
    <scope>NUCLEOTIDE SEQUENCE [MRNA]</scope>
    <source>
        <tissue>Venom gland</tissue>
    </source>
</reference>
<reference key="2">
    <citation type="journal article" date="2000" name="J. Biochem.">
        <title>Primary structure and autoproteolysis of brevilysin H6 from the venom of Gloydius halys brevicaudus.</title>
        <authorList>
            <person name="Fujimura S."/>
            <person name="Oshikawa K."/>
            <person name="Terada S."/>
            <person name="Kimoto E."/>
        </authorList>
    </citation>
    <scope>PROTEIN SEQUENCE OF 192-610</scope>
    <scope>FUNCTION</scope>
    <scope>AUTOPROTEOLYSIS</scope>
    <scope>ACTIVITY REGULATION</scope>
    <scope>SUBUNIT</scope>
    <scope>SUBCELLULAR LOCATION</scope>
    <scope>TISSUE SPECIFICITY</scope>
    <scope>PYROGLUTAMATE FORMATION AT GLN-192</scope>
    <scope>GLYCOSYLATION AT ASN-372</scope>
    <scope>DISULFIDE BONDS</scope>
    <source>
        <tissue>Venom</tissue>
    </source>
</reference>